<reference key="1">
    <citation type="journal article" date="2005" name="BMC Genomics">
        <title>Characterization of 954 bovine full-CDS cDNA sequences.</title>
        <authorList>
            <person name="Harhay G.P."/>
            <person name="Sonstegard T.S."/>
            <person name="Keele J.W."/>
            <person name="Heaton M.P."/>
            <person name="Clawson M.L."/>
            <person name="Snelling W.M."/>
            <person name="Wiedmann R.T."/>
            <person name="Van Tassell C.P."/>
            <person name="Smith T.P.L."/>
        </authorList>
    </citation>
    <scope>NUCLEOTIDE SEQUENCE [LARGE SCALE MRNA]</scope>
</reference>
<reference key="2">
    <citation type="submission" date="2006-10" db="EMBL/GenBank/DDBJ databases">
        <authorList>
            <consortium name="NIH - Mammalian Gene Collection (MGC) project"/>
        </authorList>
    </citation>
    <scope>NUCLEOTIDE SEQUENCE [LARGE SCALE MRNA]</scope>
    <source>
        <strain>Hereford</strain>
        <tissue>Fetal skin</tissue>
    </source>
</reference>
<protein>
    <recommendedName>
        <fullName>Transmembrane protein 229B</fullName>
    </recommendedName>
</protein>
<dbReference type="EMBL" id="BT020699">
    <property type="protein sequence ID" value="AAX08716.1"/>
    <property type="molecule type" value="mRNA"/>
</dbReference>
<dbReference type="EMBL" id="BC126618">
    <property type="protein sequence ID" value="AAI26619.1"/>
    <property type="molecule type" value="mRNA"/>
</dbReference>
<dbReference type="RefSeq" id="NP_001026938.1">
    <property type="nucleotide sequence ID" value="NM_001031768.2"/>
</dbReference>
<dbReference type="RefSeq" id="XP_005212060.1">
    <property type="nucleotide sequence ID" value="XM_005212003.3"/>
</dbReference>
<dbReference type="RefSeq" id="XP_005212063.1">
    <property type="nucleotide sequence ID" value="XM_005212006.5"/>
</dbReference>
<dbReference type="RefSeq" id="XP_005212064.1">
    <property type="nucleotide sequence ID" value="XM_005212007.5"/>
</dbReference>
<dbReference type="RefSeq" id="XP_005212065.1">
    <property type="nucleotide sequence ID" value="XM_005212008.5"/>
</dbReference>
<dbReference type="RefSeq" id="XP_010807788.1">
    <property type="nucleotide sequence ID" value="XM_010809486.2"/>
</dbReference>
<dbReference type="RefSeq" id="XP_010807789.1">
    <property type="nucleotide sequence ID" value="XM_010809487.2"/>
</dbReference>
<dbReference type="RefSeq" id="XP_010807790.1">
    <property type="nucleotide sequence ID" value="XM_010809488.2"/>
</dbReference>
<dbReference type="RefSeq" id="XP_015328728.1">
    <property type="nucleotide sequence ID" value="XM_015473242.3"/>
</dbReference>
<dbReference type="RefSeq" id="XP_024853453.1">
    <property type="nucleotide sequence ID" value="XM_024997685.2"/>
</dbReference>
<dbReference type="RefSeq" id="XP_024853454.1">
    <property type="nucleotide sequence ID" value="XM_024997686.2"/>
</dbReference>
<dbReference type="RefSeq" id="XP_024853455.1">
    <property type="nucleotide sequence ID" value="XM_024997687.2"/>
</dbReference>
<dbReference type="RefSeq" id="XP_024853458.1">
    <property type="nucleotide sequence ID" value="XM_024997690.2"/>
</dbReference>
<dbReference type="RefSeq" id="XP_024853459.1">
    <property type="nucleotide sequence ID" value="XM_024997691.2"/>
</dbReference>
<dbReference type="FunCoup" id="Q5EA70">
    <property type="interactions" value="804"/>
</dbReference>
<dbReference type="STRING" id="9913.ENSBTAP00000050925"/>
<dbReference type="PaxDb" id="9913-ENSBTAP00000050925"/>
<dbReference type="Ensembl" id="ENSBTAT00000053068.4">
    <property type="protein sequence ID" value="ENSBTAP00000050925.2"/>
    <property type="gene ID" value="ENSBTAG00000012900.7"/>
</dbReference>
<dbReference type="Ensembl" id="ENSBTAT00000089008.1">
    <property type="protein sequence ID" value="ENSBTAP00000099797.1"/>
    <property type="gene ID" value="ENSBTAG00000012900.7"/>
</dbReference>
<dbReference type="Ensembl" id="ENSBTAT00000089147.1">
    <property type="protein sequence ID" value="ENSBTAP00000098562.1"/>
    <property type="gene ID" value="ENSBTAG00000012900.7"/>
</dbReference>
<dbReference type="Ensembl" id="ENSBTAT00000092213.1">
    <property type="protein sequence ID" value="ENSBTAP00000077621.1"/>
    <property type="gene ID" value="ENSBTAG00000012900.7"/>
</dbReference>
<dbReference type="Ensembl" id="ENSBTAT00000101711.1">
    <property type="protein sequence ID" value="ENSBTAP00000079794.1"/>
    <property type="gene ID" value="ENSBTAG00000012900.7"/>
</dbReference>
<dbReference type="Ensembl" id="ENSBTAT00000103538.1">
    <property type="protein sequence ID" value="ENSBTAP00000097853.1"/>
    <property type="gene ID" value="ENSBTAG00000012900.7"/>
</dbReference>
<dbReference type="Ensembl" id="ENSBTAT00000117823.1">
    <property type="protein sequence ID" value="ENSBTAP00000083703.1"/>
    <property type="gene ID" value="ENSBTAG00000012900.7"/>
</dbReference>
<dbReference type="Ensembl" id="ENSBTAT00000128533.1">
    <property type="protein sequence ID" value="ENSBTAP00000097929.1"/>
    <property type="gene ID" value="ENSBTAG00000012900.7"/>
</dbReference>
<dbReference type="Ensembl" id="ENSBTAT00000131883.1">
    <property type="protein sequence ID" value="ENSBTAP00000103647.1"/>
    <property type="gene ID" value="ENSBTAG00000012900.7"/>
</dbReference>
<dbReference type="Ensembl" id="ENSBTAT00000135513.1">
    <property type="protein sequence ID" value="ENSBTAP00000087719.1"/>
    <property type="gene ID" value="ENSBTAG00000012900.7"/>
</dbReference>
<dbReference type="GeneID" id="536375"/>
<dbReference type="KEGG" id="bta:536375"/>
<dbReference type="CTD" id="161145"/>
<dbReference type="VEuPathDB" id="HostDB:ENSBTAG00000012900"/>
<dbReference type="VGNC" id="VGNC:36045">
    <property type="gene designation" value="TMEM229B"/>
</dbReference>
<dbReference type="eggNOG" id="ENOG502QTFF">
    <property type="taxonomic scope" value="Eukaryota"/>
</dbReference>
<dbReference type="GeneTree" id="ENSGT00390000010899"/>
<dbReference type="HOGENOM" id="CLU_102218_0_0_1"/>
<dbReference type="InParanoid" id="Q5EA70"/>
<dbReference type="OMA" id="DGWSNHR"/>
<dbReference type="OrthoDB" id="5946847at2759"/>
<dbReference type="TreeFam" id="TF336481"/>
<dbReference type="Proteomes" id="UP000009136">
    <property type="component" value="Chromosome 10"/>
</dbReference>
<dbReference type="Bgee" id="ENSBTAG00000012900">
    <property type="expression patterns" value="Expressed in esophagus and 98 other cell types or tissues"/>
</dbReference>
<dbReference type="GO" id="GO:0016020">
    <property type="term" value="C:membrane"/>
    <property type="evidence" value="ECO:0007669"/>
    <property type="project" value="UniProtKB-SubCell"/>
</dbReference>
<dbReference type="GO" id="GO:0042116">
    <property type="term" value="P:macrophage activation"/>
    <property type="evidence" value="ECO:0007669"/>
    <property type="project" value="Ensembl"/>
</dbReference>
<dbReference type="GO" id="GO:0009617">
    <property type="term" value="P:response to bacterium"/>
    <property type="evidence" value="ECO:0007669"/>
    <property type="project" value="Ensembl"/>
</dbReference>
<dbReference type="InterPro" id="IPR010540">
    <property type="entry name" value="CmpB_TMEM229"/>
</dbReference>
<dbReference type="PANTHER" id="PTHR31746">
    <property type="entry name" value="TRANSMEMBRANE PROTEIN 229 FAMILY MEMBER"/>
    <property type="match status" value="1"/>
</dbReference>
<dbReference type="PANTHER" id="PTHR31746:SF3">
    <property type="entry name" value="TRANSMEMBRANE PROTEIN 229B"/>
    <property type="match status" value="1"/>
</dbReference>
<dbReference type="Pfam" id="PF06541">
    <property type="entry name" value="ABC_trans_CmpB"/>
    <property type="match status" value="1"/>
</dbReference>
<evidence type="ECO:0000255" key="1"/>
<evidence type="ECO:0000305" key="2"/>
<comment type="subcellular location">
    <subcellularLocation>
        <location evidence="2">Membrane</location>
        <topology evidence="2">Multi-pass membrane protein</topology>
    </subcellularLocation>
</comment>
<comment type="similarity">
    <text evidence="2">Belongs to the TMEM229 family.</text>
</comment>
<proteinExistence type="evidence at transcript level"/>
<organism>
    <name type="scientific">Bos taurus</name>
    <name type="common">Bovine</name>
    <dbReference type="NCBI Taxonomy" id="9913"/>
    <lineage>
        <taxon>Eukaryota</taxon>
        <taxon>Metazoa</taxon>
        <taxon>Chordata</taxon>
        <taxon>Craniata</taxon>
        <taxon>Vertebrata</taxon>
        <taxon>Euteleostomi</taxon>
        <taxon>Mammalia</taxon>
        <taxon>Eutheria</taxon>
        <taxon>Laurasiatheria</taxon>
        <taxon>Artiodactyla</taxon>
        <taxon>Ruminantia</taxon>
        <taxon>Pecora</taxon>
        <taxon>Bovidae</taxon>
        <taxon>Bovinae</taxon>
        <taxon>Bos</taxon>
    </lineage>
</organism>
<gene>
    <name type="primary">TMEM229B</name>
</gene>
<keyword id="KW-0472">Membrane</keyword>
<keyword id="KW-1185">Reference proteome</keyword>
<keyword id="KW-0812">Transmembrane</keyword>
<keyword id="KW-1133">Transmembrane helix</keyword>
<accession>Q5EA70</accession>
<feature type="chain" id="PRO_0000263680" description="Transmembrane protein 229B">
    <location>
        <begin position="1"/>
        <end position="167"/>
    </location>
</feature>
<feature type="topological domain" description="Cytoplasmic" evidence="1">
    <location>
        <begin position="1"/>
        <end position="14"/>
    </location>
</feature>
<feature type="transmembrane region" description="Helical" evidence="1">
    <location>
        <begin position="15"/>
        <end position="35"/>
    </location>
</feature>
<feature type="topological domain" description="Extracellular" evidence="1">
    <location>
        <begin position="36"/>
        <end position="40"/>
    </location>
</feature>
<feature type="transmembrane region" description="Helical" evidence="1">
    <location>
        <begin position="41"/>
        <end position="61"/>
    </location>
</feature>
<feature type="topological domain" description="Cytoplasmic" evidence="1">
    <location>
        <begin position="62"/>
        <end position="73"/>
    </location>
</feature>
<feature type="transmembrane region" description="Helical" evidence="1">
    <location>
        <begin position="74"/>
        <end position="94"/>
    </location>
</feature>
<feature type="topological domain" description="Extracellular" evidence="1">
    <location>
        <begin position="95"/>
        <end position="111"/>
    </location>
</feature>
<feature type="transmembrane region" description="Helical" evidence="1">
    <location>
        <begin position="112"/>
        <end position="132"/>
    </location>
</feature>
<feature type="topological domain" description="Cytoplasmic" evidence="1">
    <location>
        <begin position="133"/>
        <end position="167"/>
    </location>
</feature>
<name>T229B_BOVIN</name>
<sequence>MASAEPLTALSRWYLYAIHGYFCEVMFTAAWEFVVNFNWKFPGVTSVWALFIYGTSILIVERMYLRLRGRCPLLLRCLIYTLWTYLWEFTTGFILRQFNACPWDYSQFDFDFMGLITLEYAVPWFCGALLVEQFVIRNTLRLRFDKDAEPGEPSGALALANGHVKTD</sequence>